<reference key="1">
    <citation type="submission" date="2007-09" db="EMBL/GenBank/DDBJ databases">
        <title>Complete genome sequence of Rickettsia rickettsii.</title>
        <authorList>
            <person name="Madan A."/>
            <person name="Fahey J."/>
            <person name="Helton E."/>
            <person name="Ketteman M."/>
            <person name="Madan A."/>
            <person name="Rodrigues S."/>
            <person name="Sanchez A."/>
            <person name="Dasch G."/>
            <person name="Eremeeva M."/>
        </authorList>
    </citation>
    <scope>NUCLEOTIDE SEQUENCE [LARGE SCALE GENOMIC DNA]</scope>
    <source>
        <strain>Sheila Smith</strain>
    </source>
</reference>
<feature type="chain" id="PRO_0000347766" description="Alanine--tRNA ligase">
    <location>
        <begin position="1"/>
        <end position="877"/>
    </location>
</feature>
<feature type="binding site" evidence="1">
    <location>
        <position position="567"/>
    </location>
    <ligand>
        <name>Zn(2+)</name>
        <dbReference type="ChEBI" id="CHEBI:29105"/>
    </ligand>
</feature>
<feature type="binding site" evidence="1">
    <location>
        <position position="571"/>
    </location>
    <ligand>
        <name>Zn(2+)</name>
        <dbReference type="ChEBI" id="CHEBI:29105"/>
    </ligand>
</feature>
<feature type="binding site" evidence="1">
    <location>
        <position position="669"/>
    </location>
    <ligand>
        <name>Zn(2+)</name>
        <dbReference type="ChEBI" id="CHEBI:29105"/>
    </ligand>
</feature>
<feature type="binding site" evidence="1">
    <location>
        <position position="673"/>
    </location>
    <ligand>
        <name>Zn(2+)</name>
        <dbReference type="ChEBI" id="CHEBI:29105"/>
    </ligand>
</feature>
<gene>
    <name evidence="1" type="primary">alaS</name>
    <name type="ordered locus">A1G_07260</name>
</gene>
<organism>
    <name type="scientific">Rickettsia rickettsii (strain Sheila Smith)</name>
    <dbReference type="NCBI Taxonomy" id="392021"/>
    <lineage>
        <taxon>Bacteria</taxon>
        <taxon>Pseudomonadati</taxon>
        <taxon>Pseudomonadota</taxon>
        <taxon>Alphaproteobacteria</taxon>
        <taxon>Rickettsiales</taxon>
        <taxon>Rickettsiaceae</taxon>
        <taxon>Rickettsieae</taxon>
        <taxon>Rickettsia</taxon>
        <taxon>spotted fever group</taxon>
    </lineage>
</organism>
<keyword id="KW-0030">Aminoacyl-tRNA synthetase</keyword>
<keyword id="KW-0067">ATP-binding</keyword>
<keyword id="KW-0963">Cytoplasm</keyword>
<keyword id="KW-0436">Ligase</keyword>
<keyword id="KW-0479">Metal-binding</keyword>
<keyword id="KW-0547">Nucleotide-binding</keyword>
<keyword id="KW-0648">Protein biosynthesis</keyword>
<keyword id="KW-0694">RNA-binding</keyword>
<keyword id="KW-0820">tRNA-binding</keyword>
<keyword id="KW-0862">Zinc</keyword>
<accession>A8GU16</accession>
<protein>
    <recommendedName>
        <fullName evidence="1">Alanine--tRNA ligase</fullName>
        <ecNumber evidence="1">6.1.1.7</ecNumber>
    </recommendedName>
    <alternativeName>
        <fullName evidence="1">Alanyl-tRNA synthetase</fullName>
        <shortName evidence="1">AlaRS</shortName>
    </alternativeName>
</protein>
<dbReference type="EC" id="6.1.1.7" evidence="1"/>
<dbReference type="EMBL" id="CP000848">
    <property type="protein sequence ID" value="ABV76891.1"/>
    <property type="molecule type" value="Genomic_DNA"/>
</dbReference>
<dbReference type="RefSeq" id="WP_012151430.1">
    <property type="nucleotide sequence ID" value="NZ_CP121767.1"/>
</dbReference>
<dbReference type="SMR" id="A8GU16"/>
<dbReference type="GeneID" id="79937924"/>
<dbReference type="KEGG" id="rri:A1G_07260"/>
<dbReference type="HOGENOM" id="CLU_004485_1_1_5"/>
<dbReference type="Proteomes" id="UP000006832">
    <property type="component" value="Chromosome"/>
</dbReference>
<dbReference type="GO" id="GO:0005829">
    <property type="term" value="C:cytosol"/>
    <property type="evidence" value="ECO:0007669"/>
    <property type="project" value="TreeGrafter"/>
</dbReference>
<dbReference type="GO" id="GO:0004813">
    <property type="term" value="F:alanine-tRNA ligase activity"/>
    <property type="evidence" value="ECO:0007669"/>
    <property type="project" value="UniProtKB-UniRule"/>
</dbReference>
<dbReference type="GO" id="GO:0002161">
    <property type="term" value="F:aminoacyl-tRNA deacylase activity"/>
    <property type="evidence" value="ECO:0007669"/>
    <property type="project" value="TreeGrafter"/>
</dbReference>
<dbReference type="GO" id="GO:0005524">
    <property type="term" value="F:ATP binding"/>
    <property type="evidence" value="ECO:0007669"/>
    <property type="project" value="UniProtKB-UniRule"/>
</dbReference>
<dbReference type="GO" id="GO:0000049">
    <property type="term" value="F:tRNA binding"/>
    <property type="evidence" value="ECO:0007669"/>
    <property type="project" value="UniProtKB-KW"/>
</dbReference>
<dbReference type="GO" id="GO:0008270">
    <property type="term" value="F:zinc ion binding"/>
    <property type="evidence" value="ECO:0007669"/>
    <property type="project" value="UniProtKB-UniRule"/>
</dbReference>
<dbReference type="GO" id="GO:0006419">
    <property type="term" value="P:alanyl-tRNA aminoacylation"/>
    <property type="evidence" value="ECO:0007669"/>
    <property type="project" value="UniProtKB-UniRule"/>
</dbReference>
<dbReference type="GO" id="GO:0045892">
    <property type="term" value="P:negative regulation of DNA-templated transcription"/>
    <property type="evidence" value="ECO:0007669"/>
    <property type="project" value="TreeGrafter"/>
</dbReference>
<dbReference type="CDD" id="cd00673">
    <property type="entry name" value="AlaRS_core"/>
    <property type="match status" value="1"/>
</dbReference>
<dbReference type="FunFam" id="3.10.310.40:FF:000001">
    <property type="entry name" value="Alanine--tRNA ligase"/>
    <property type="match status" value="1"/>
</dbReference>
<dbReference type="FunFam" id="3.30.54.20:FF:000001">
    <property type="entry name" value="Alanine--tRNA ligase"/>
    <property type="match status" value="1"/>
</dbReference>
<dbReference type="FunFam" id="3.30.930.10:FF:000004">
    <property type="entry name" value="Alanine--tRNA ligase"/>
    <property type="match status" value="1"/>
</dbReference>
<dbReference type="FunFam" id="3.30.980.10:FF:000004">
    <property type="entry name" value="Alanine--tRNA ligase, cytoplasmic"/>
    <property type="match status" value="1"/>
</dbReference>
<dbReference type="Gene3D" id="2.40.30.130">
    <property type="match status" value="1"/>
</dbReference>
<dbReference type="Gene3D" id="3.10.310.40">
    <property type="match status" value="1"/>
</dbReference>
<dbReference type="Gene3D" id="3.30.54.20">
    <property type="match status" value="1"/>
</dbReference>
<dbReference type="Gene3D" id="3.30.930.10">
    <property type="entry name" value="Bira Bifunctional Protein, Domain 2"/>
    <property type="match status" value="1"/>
</dbReference>
<dbReference type="Gene3D" id="3.30.980.10">
    <property type="entry name" value="Threonyl-trna Synthetase, Chain A, domain 2"/>
    <property type="match status" value="1"/>
</dbReference>
<dbReference type="HAMAP" id="MF_00036_B">
    <property type="entry name" value="Ala_tRNA_synth_B"/>
    <property type="match status" value="1"/>
</dbReference>
<dbReference type="InterPro" id="IPR045864">
    <property type="entry name" value="aa-tRNA-synth_II/BPL/LPL"/>
</dbReference>
<dbReference type="InterPro" id="IPR002318">
    <property type="entry name" value="Ala-tRNA-lgiase_IIc"/>
</dbReference>
<dbReference type="InterPro" id="IPR018162">
    <property type="entry name" value="Ala-tRNA-ligase_IIc_anticod-bd"/>
</dbReference>
<dbReference type="InterPro" id="IPR018165">
    <property type="entry name" value="Ala-tRNA-synth_IIc_core"/>
</dbReference>
<dbReference type="InterPro" id="IPR018164">
    <property type="entry name" value="Ala-tRNA-synth_IIc_N"/>
</dbReference>
<dbReference type="InterPro" id="IPR050058">
    <property type="entry name" value="Ala-tRNA_ligase"/>
</dbReference>
<dbReference type="InterPro" id="IPR023033">
    <property type="entry name" value="Ala_tRNA_ligase_euk/bac"/>
</dbReference>
<dbReference type="InterPro" id="IPR003156">
    <property type="entry name" value="DHHA1_dom"/>
</dbReference>
<dbReference type="InterPro" id="IPR018163">
    <property type="entry name" value="Thr/Ala-tRNA-synth_IIc_edit"/>
</dbReference>
<dbReference type="InterPro" id="IPR009000">
    <property type="entry name" value="Transl_B-barrel_sf"/>
</dbReference>
<dbReference type="InterPro" id="IPR012947">
    <property type="entry name" value="tRNA_SAD"/>
</dbReference>
<dbReference type="NCBIfam" id="TIGR00344">
    <property type="entry name" value="alaS"/>
    <property type="match status" value="1"/>
</dbReference>
<dbReference type="PANTHER" id="PTHR11777:SF9">
    <property type="entry name" value="ALANINE--TRNA LIGASE, CYTOPLASMIC"/>
    <property type="match status" value="1"/>
</dbReference>
<dbReference type="PANTHER" id="PTHR11777">
    <property type="entry name" value="ALANYL-TRNA SYNTHETASE"/>
    <property type="match status" value="1"/>
</dbReference>
<dbReference type="Pfam" id="PF02272">
    <property type="entry name" value="DHHA1"/>
    <property type="match status" value="1"/>
</dbReference>
<dbReference type="Pfam" id="PF01411">
    <property type="entry name" value="tRNA-synt_2c"/>
    <property type="match status" value="1"/>
</dbReference>
<dbReference type="Pfam" id="PF07973">
    <property type="entry name" value="tRNA_SAD"/>
    <property type="match status" value="1"/>
</dbReference>
<dbReference type="PRINTS" id="PR00980">
    <property type="entry name" value="TRNASYNTHALA"/>
</dbReference>
<dbReference type="SMART" id="SM00863">
    <property type="entry name" value="tRNA_SAD"/>
    <property type="match status" value="1"/>
</dbReference>
<dbReference type="SUPFAM" id="SSF55681">
    <property type="entry name" value="Class II aaRS and biotin synthetases"/>
    <property type="match status" value="1"/>
</dbReference>
<dbReference type="SUPFAM" id="SSF101353">
    <property type="entry name" value="Putative anticodon-binding domain of alanyl-tRNA synthetase (AlaRS)"/>
    <property type="match status" value="1"/>
</dbReference>
<dbReference type="SUPFAM" id="SSF55186">
    <property type="entry name" value="ThrRS/AlaRS common domain"/>
    <property type="match status" value="1"/>
</dbReference>
<dbReference type="SUPFAM" id="SSF50447">
    <property type="entry name" value="Translation proteins"/>
    <property type="match status" value="1"/>
</dbReference>
<dbReference type="PROSITE" id="PS50860">
    <property type="entry name" value="AA_TRNA_LIGASE_II_ALA"/>
    <property type="match status" value="1"/>
</dbReference>
<proteinExistence type="inferred from homology"/>
<evidence type="ECO:0000255" key="1">
    <source>
        <dbReference type="HAMAP-Rule" id="MF_00036"/>
    </source>
</evidence>
<comment type="function">
    <text evidence="1">Catalyzes the attachment of alanine to tRNA(Ala) in a two-step reaction: alanine is first activated by ATP to form Ala-AMP and then transferred to the acceptor end of tRNA(Ala). Also edits incorrectly charged Ser-tRNA(Ala) and Gly-tRNA(Ala) via its editing domain.</text>
</comment>
<comment type="catalytic activity">
    <reaction evidence="1">
        <text>tRNA(Ala) + L-alanine + ATP = L-alanyl-tRNA(Ala) + AMP + diphosphate</text>
        <dbReference type="Rhea" id="RHEA:12540"/>
        <dbReference type="Rhea" id="RHEA-COMP:9657"/>
        <dbReference type="Rhea" id="RHEA-COMP:9923"/>
        <dbReference type="ChEBI" id="CHEBI:30616"/>
        <dbReference type="ChEBI" id="CHEBI:33019"/>
        <dbReference type="ChEBI" id="CHEBI:57972"/>
        <dbReference type="ChEBI" id="CHEBI:78442"/>
        <dbReference type="ChEBI" id="CHEBI:78497"/>
        <dbReference type="ChEBI" id="CHEBI:456215"/>
        <dbReference type="EC" id="6.1.1.7"/>
    </reaction>
</comment>
<comment type="cofactor">
    <cofactor evidence="1">
        <name>Zn(2+)</name>
        <dbReference type="ChEBI" id="CHEBI:29105"/>
    </cofactor>
    <text evidence="1">Binds 1 zinc ion per subunit.</text>
</comment>
<comment type="subcellular location">
    <subcellularLocation>
        <location evidence="1">Cytoplasm</location>
    </subcellularLocation>
</comment>
<comment type="domain">
    <text evidence="1">Consists of three domains; the N-terminal catalytic domain, the editing domain and the C-terminal C-Ala domain. The editing domain removes incorrectly charged amino acids, while the C-Ala domain, along with tRNA(Ala), serves as a bridge to cooperatively bring together the editing and aminoacylation centers thus stimulating deacylation of misacylated tRNAs.</text>
</comment>
<comment type="similarity">
    <text evidence="1">Belongs to the class-II aminoacyl-tRNA synthetase family.</text>
</comment>
<name>SYA_RICRS</name>
<sequence length="877" mass="98632">MTKFTTEEVRSKFITYFKANNHTHVPASSLIPHNDPSLMFVNSGMVQFKNVFTGQGKRPYNKAVTSQKSLRAGGKHNDLENVGYTARHHTFFEMLGNFSFGDYFKEQAIYYAWNLLTKEFELPKDKLYATIYHTDDEAAAYWKKIAGFGDDRIIKIKTNDNFWSMGDTGPCGPCSEIFYDHGEQIYGGLPGTKDEDGDRFIEIWNMVFMQYEQIDKDTSIELSQKSIDTGMGLERMTAVLQHVNNNYDIDLFQEIINFTENIVKVKAEGEAKFSYRVIADHLRASSFLIADGVIPSNEGRGYVLRRIMRRSMRHAHMLGSKEPLMYKLLPKLVDLMGNVYPELKRAESFISSILEQEEIRFKATLERGLKLLTEETETLTKGNKLSGEVAFKLYDTYGFPLDLTEDILKNRDIAVDHKGFEEQMLMQKELARKSWLGSGESKTNQLWFDIKEQHGSTEFLGYTLNEAKCKIIALIKNNNLVNDIKEIDTQFLLISNQTPFYGESGGQIGDIGTISAKDSEVEVIDTLKYLGSIIVHKCILKKGQINVGENANFSIDIRYRQNLRIHHSATHILHAVLHEVLGKHVTQKGSLVAPTYLRFDISHSKAVTNEEITLIEDKVNEIIRDNHEVTTTLMATEDAIKQGAMALFGEKYDSEVRVVKMGETSLELCGGTHVRRTGDIGCFKITSESAIAAGVRRIEAVCGEFVITLMRENDSLLKSIESSFKTNKNELITKVNNILERNKEVEKELEKTLLASLDLSIEQIEKQAAQITGIKLLYKKVGNIDNKILRQAAENLTKKVEDLIMVYIAEGIGKLSITVAVSKAITDKYNADIIAKKLSLFLGGSGGGGQASLAQAGGNDIGKLTNIHEKLYSLLTV</sequence>